<sequence length="81" mass="8721">MSILSSLISISISSPSKNSTVSSNNNYYSAVSMEGITIASSHIKTISYTSPKSSNTRAYSPTGYGYSYSYSYGYSSCGYNF</sequence>
<gene>
    <name type="primary">hssl5</name>
    <name type="ORF">DDB_G0268454</name>
</gene>
<proteinExistence type="inferred from homology"/>
<reference key="1">
    <citation type="journal article" date="2005" name="Nature">
        <title>The genome of the social amoeba Dictyostelium discoideum.</title>
        <authorList>
            <person name="Eichinger L."/>
            <person name="Pachebat J.A."/>
            <person name="Gloeckner G."/>
            <person name="Rajandream M.A."/>
            <person name="Sucgang R."/>
            <person name="Berriman M."/>
            <person name="Song J."/>
            <person name="Olsen R."/>
            <person name="Szafranski K."/>
            <person name="Xu Q."/>
            <person name="Tunggal B."/>
            <person name="Kummerfeld S."/>
            <person name="Madera M."/>
            <person name="Konfortov B.A."/>
            <person name="Rivero F."/>
            <person name="Bankier A.T."/>
            <person name="Lehmann R."/>
            <person name="Hamlin N."/>
            <person name="Davies R."/>
            <person name="Gaudet P."/>
            <person name="Fey P."/>
            <person name="Pilcher K."/>
            <person name="Chen G."/>
            <person name="Saunders D."/>
            <person name="Sodergren E.J."/>
            <person name="Davis P."/>
            <person name="Kerhornou A."/>
            <person name="Nie X."/>
            <person name="Hall N."/>
            <person name="Anjard C."/>
            <person name="Hemphill L."/>
            <person name="Bason N."/>
            <person name="Farbrother P."/>
            <person name="Desany B."/>
            <person name="Just E."/>
            <person name="Morio T."/>
            <person name="Rost R."/>
            <person name="Churcher C.M."/>
            <person name="Cooper J."/>
            <person name="Haydock S."/>
            <person name="van Driessche N."/>
            <person name="Cronin A."/>
            <person name="Goodhead I."/>
            <person name="Muzny D.M."/>
            <person name="Mourier T."/>
            <person name="Pain A."/>
            <person name="Lu M."/>
            <person name="Harper D."/>
            <person name="Lindsay R."/>
            <person name="Hauser H."/>
            <person name="James K.D."/>
            <person name="Quiles M."/>
            <person name="Madan Babu M."/>
            <person name="Saito T."/>
            <person name="Buchrieser C."/>
            <person name="Wardroper A."/>
            <person name="Felder M."/>
            <person name="Thangavelu M."/>
            <person name="Johnson D."/>
            <person name="Knights A."/>
            <person name="Loulseged H."/>
            <person name="Mungall K.L."/>
            <person name="Oliver K."/>
            <person name="Price C."/>
            <person name="Quail M.A."/>
            <person name="Urushihara H."/>
            <person name="Hernandez J."/>
            <person name="Rabbinowitsch E."/>
            <person name="Steffen D."/>
            <person name="Sanders M."/>
            <person name="Ma J."/>
            <person name="Kohara Y."/>
            <person name="Sharp S."/>
            <person name="Simmonds M.N."/>
            <person name="Spiegler S."/>
            <person name="Tivey A."/>
            <person name="Sugano S."/>
            <person name="White B."/>
            <person name="Walker D."/>
            <person name="Woodward J.R."/>
            <person name="Winckler T."/>
            <person name="Tanaka Y."/>
            <person name="Shaulsky G."/>
            <person name="Schleicher M."/>
            <person name="Weinstock G.M."/>
            <person name="Rosenthal A."/>
            <person name="Cox E.C."/>
            <person name="Chisholm R.L."/>
            <person name="Gibbs R.A."/>
            <person name="Loomis W.F."/>
            <person name="Platzer M."/>
            <person name="Kay R.R."/>
            <person name="Williams J.G."/>
            <person name="Dear P.H."/>
            <person name="Noegel A.A."/>
            <person name="Barrell B.G."/>
            <person name="Kuspa A."/>
        </authorList>
    </citation>
    <scope>NUCLEOTIDE SEQUENCE [LARGE SCALE GENOMIC DNA]</scope>
    <source>
        <strain>AX4</strain>
    </source>
</reference>
<comment type="similarity">
    <text evidence="1">Belongs to the hssA/B family.</text>
</comment>
<dbReference type="EMBL" id="AAFI02000003">
    <property type="protein sequence ID" value="EAL73680.1"/>
    <property type="molecule type" value="Genomic_DNA"/>
</dbReference>
<dbReference type="RefSeq" id="XP_647607.1">
    <property type="nucleotide sequence ID" value="XM_642515.1"/>
</dbReference>
<dbReference type="PaxDb" id="44689-DDB0252792"/>
<dbReference type="EnsemblProtists" id="EAL73680">
    <property type="protein sequence ID" value="EAL73680"/>
    <property type="gene ID" value="DDB_G0268454"/>
</dbReference>
<dbReference type="GeneID" id="8616419"/>
<dbReference type="KEGG" id="ddi:DDB_G0268454"/>
<dbReference type="dictyBase" id="DDB_G0268454"/>
<dbReference type="HOGENOM" id="CLU_2578855_0_0_1"/>
<dbReference type="InParanoid" id="Q55FC6"/>
<dbReference type="PRO" id="PR:Q55FC6"/>
<dbReference type="Proteomes" id="UP000002195">
    <property type="component" value="Chromosome 1"/>
</dbReference>
<accession>Q55FC6</accession>
<keyword id="KW-1185">Reference proteome</keyword>
<protein>
    <recommendedName>
        <fullName>HssA/B-like protein 5</fullName>
    </recommendedName>
</protein>
<name>HSL5_DICDI</name>
<evidence type="ECO:0000305" key="1"/>
<organism>
    <name type="scientific">Dictyostelium discoideum</name>
    <name type="common">Social amoeba</name>
    <dbReference type="NCBI Taxonomy" id="44689"/>
    <lineage>
        <taxon>Eukaryota</taxon>
        <taxon>Amoebozoa</taxon>
        <taxon>Evosea</taxon>
        <taxon>Eumycetozoa</taxon>
        <taxon>Dictyostelia</taxon>
        <taxon>Dictyosteliales</taxon>
        <taxon>Dictyosteliaceae</taxon>
        <taxon>Dictyostelium</taxon>
    </lineage>
</organism>
<feature type="chain" id="PRO_0000330375" description="HssA/B-like protein 5">
    <location>
        <begin position="1"/>
        <end position="81"/>
    </location>
</feature>